<protein>
    <recommendedName>
        <fullName evidence="1">Bifunctional polymyxin resistance protein ArnA</fullName>
    </recommendedName>
    <domain>
        <recommendedName>
            <fullName evidence="1">UDP-4-amino-4-deoxy-L-arabinose formyltransferase</fullName>
            <ecNumber evidence="1">2.1.2.13</ecNumber>
        </recommendedName>
        <alternativeName>
            <fullName evidence="1">ArnAFT</fullName>
        </alternativeName>
        <alternativeName>
            <fullName evidence="1">UDP-L-Ara4N formyltransferase</fullName>
        </alternativeName>
    </domain>
    <domain>
        <recommendedName>
            <fullName evidence="1">UDP-glucuronic acid oxidase, UDP-4-keto-hexauronic acid decarboxylating</fullName>
            <ecNumber evidence="1">1.1.1.305</ecNumber>
        </recommendedName>
        <alternativeName>
            <fullName evidence="1">ArnADH</fullName>
        </alternativeName>
        <alternativeName>
            <fullName evidence="1">UDP-GlcUA decarboxylase</fullName>
        </alternativeName>
        <alternativeName>
            <fullName evidence="1">UDP-glucuronic acid dehydrogenase</fullName>
        </alternativeName>
    </domain>
</protein>
<evidence type="ECO:0000255" key="1">
    <source>
        <dbReference type="HAMAP-Rule" id="MF_01166"/>
    </source>
</evidence>
<reference key="1">
    <citation type="journal article" date="2006" name="J. Bacteriol.">
        <title>Complete genome sequence of Yersinia pestis strains Antiqua and Nepal516: evidence of gene reduction in an emerging pathogen.</title>
        <authorList>
            <person name="Chain P.S.G."/>
            <person name="Hu P."/>
            <person name="Malfatti S.A."/>
            <person name="Radnedge L."/>
            <person name="Larimer F."/>
            <person name="Vergez L.M."/>
            <person name="Worsham P."/>
            <person name="Chu M.C."/>
            <person name="Andersen G.L."/>
        </authorList>
    </citation>
    <scope>NUCLEOTIDE SEQUENCE [LARGE SCALE GENOMIC DNA]</scope>
    <source>
        <strain>Antiqua</strain>
    </source>
</reference>
<keyword id="KW-0046">Antibiotic resistance</keyword>
<keyword id="KW-0441">Lipid A biosynthesis</keyword>
<keyword id="KW-0444">Lipid biosynthesis</keyword>
<keyword id="KW-0443">Lipid metabolism</keyword>
<keyword id="KW-0448">Lipopolysaccharide biosynthesis</keyword>
<keyword id="KW-0511">Multifunctional enzyme</keyword>
<keyword id="KW-0520">NAD</keyword>
<keyword id="KW-0560">Oxidoreductase</keyword>
<keyword id="KW-0808">Transferase</keyword>
<organism>
    <name type="scientific">Yersinia pestis bv. Antiqua (strain Antiqua)</name>
    <dbReference type="NCBI Taxonomy" id="360102"/>
    <lineage>
        <taxon>Bacteria</taxon>
        <taxon>Pseudomonadati</taxon>
        <taxon>Pseudomonadota</taxon>
        <taxon>Gammaproteobacteria</taxon>
        <taxon>Enterobacterales</taxon>
        <taxon>Yersiniaceae</taxon>
        <taxon>Yersinia</taxon>
    </lineage>
</organism>
<gene>
    <name evidence="1" type="primary">arnA</name>
    <name type="ordered locus">YPA_1764</name>
</gene>
<feature type="chain" id="PRO_0000281733" description="Bifunctional polymyxin resistance protein ArnA">
    <location>
        <begin position="1"/>
        <end position="667"/>
    </location>
</feature>
<feature type="region of interest" description="Formyltransferase ArnAFT">
    <location>
        <begin position="1"/>
        <end position="304"/>
    </location>
</feature>
<feature type="region of interest" description="Dehydrogenase ArnADH">
    <location>
        <begin position="314"/>
        <end position="667"/>
    </location>
</feature>
<feature type="active site" description="Proton donor; for formyltransferase activity" evidence="1">
    <location>
        <position position="104"/>
    </location>
</feature>
<feature type="active site" description="Proton acceptor; for decarboxylase activity" evidence="1">
    <location>
        <position position="434"/>
    </location>
</feature>
<feature type="active site" description="Proton donor; for decarboxylase activity" evidence="1">
    <location>
        <position position="619"/>
    </location>
</feature>
<feature type="binding site" evidence="1">
    <location>
        <position position="114"/>
    </location>
    <ligand>
        <name>(6R)-10-formyltetrahydrofolate</name>
        <dbReference type="ChEBI" id="CHEBI:195366"/>
    </ligand>
</feature>
<feature type="binding site" evidence="1">
    <location>
        <begin position="136"/>
        <end position="140"/>
    </location>
    <ligand>
        <name>(6R)-10-formyltetrahydrofolate</name>
        <dbReference type="ChEBI" id="CHEBI:195366"/>
    </ligand>
</feature>
<feature type="binding site" evidence="1">
    <location>
        <position position="347"/>
    </location>
    <ligand>
        <name>NAD(+)</name>
        <dbReference type="ChEBI" id="CHEBI:57540"/>
    </ligand>
</feature>
<feature type="binding site" evidence="1">
    <location>
        <begin position="368"/>
        <end position="369"/>
    </location>
    <ligand>
        <name>NAD(+)</name>
        <dbReference type="ChEBI" id="CHEBI:57540"/>
    </ligand>
</feature>
<feature type="binding site" evidence="1">
    <location>
        <position position="393"/>
    </location>
    <ligand>
        <name>UDP-alpha-D-glucuronate</name>
        <dbReference type="ChEBI" id="CHEBI:58052"/>
    </ligand>
</feature>
<feature type="binding site" evidence="1">
    <location>
        <position position="398"/>
    </location>
    <ligand>
        <name>UDP-alpha-D-glucuronate</name>
        <dbReference type="ChEBI" id="CHEBI:58052"/>
    </ligand>
</feature>
<feature type="binding site" evidence="1">
    <location>
        <begin position="432"/>
        <end position="433"/>
    </location>
    <ligand>
        <name>UDP-alpha-D-glucuronate</name>
        <dbReference type="ChEBI" id="CHEBI:58052"/>
    </ligand>
</feature>
<feature type="binding site" evidence="1">
    <location>
        <position position="460"/>
    </location>
    <ligand>
        <name>UDP-alpha-D-glucuronate</name>
        <dbReference type="ChEBI" id="CHEBI:58052"/>
    </ligand>
</feature>
<feature type="binding site" evidence="1">
    <location>
        <position position="492"/>
    </location>
    <ligand>
        <name>UDP-alpha-D-glucuronate</name>
        <dbReference type="ChEBI" id="CHEBI:58052"/>
    </ligand>
</feature>
<feature type="binding site" evidence="1">
    <location>
        <begin position="526"/>
        <end position="535"/>
    </location>
    <ligand>
        <name>UDP-alpha-D-glucuronate</name>
        <dbReference type="ChEBI" id="CHEBI:58052"/>
    </ligand>
</feature>
<feature type="binding site" evidence="1">
    <location>
        <position position="613"/>
    </location>
    <ligand>
        <name>UDP-alpha-D-glucuronate</name>
        <dbReference type="ChEBI" id="CHEBI:58052"/>
    </ligand>
</feature>
<feature type="site" description="Transition state stabilizer" evidence="1">
    <location>
        <position position="102"/>
    </location>
</feature>
<feature type="site" description="Raises pKa of active site His" evidence="1">
    <location>
        <position position="140"/>
    </location>
</feature>
<dbReference type="EC" id="2.1.2.13" evidence="1"/>
<dbReference type="EC" id="1.1.1.305" evidence="1"/>
<dbReference type="EMBL" id="CP000308">
    <property type="protein sequence ID" value="ABG13730.1"/>
    <property type="molecule type" value="Genomic_DNA"/>
</dbReference>
<dbReference type="RefSeq" id="WP_002211823.1">
    <property type="nucleotide sequence ID" value="NZ_CP009906.1"/>
</dbReference>
<dbReference type="SMR" id="Q1C742"/>
<dbReference type="GeneID" id="57976257"/>
<dbReference type="KEGG" id="ypa:YPA_1764"/>
<dbReference type="UniPathway" id="UPA00030"/>
<dbReference type="UniPathway" id="UPA00032">
    <property type="reaction ID" value="UER00492"/>
</dbReference>
<dbReference type="UniPathway" id="UPA00032">
    <property type="reaction ID" value="UER00494"/>
</dbReference>
<dbReference type="Proteomes" id="UP000001971">
    <property type="component" value="Chromosome"/>
</dbReference>
<dbReference type="GO" id="GO:0016020">
    <property type="term" value="C:membrane"/>
    <property type="evidence" value="ECO:0007669"/>
    <property type="project" value="GOC"/>
</dbReference>
<dbReference type="GO" id="GO:0016831">
    <property type="term" value="F:carboxy-lyase activity"/>
    <property type="evidence" value="ECO:0007669"/>
    <property type="project" value="InterPro"/>
</dbReference>
<dbReference type="GO" id="GO:0099619">
    <property type="term" value="F:UDP-4-amino-4-deoxy-L-arabinose formyltransferase activity"/>
    <property type="evidence" value="ECO:0007669"/>
    <property type="project" value="UniProtKB-EC"/>
</dbReference>
<dbReference type="GO" id="GO:0099618">
    <property type="term" value="F:UDP-glucuronate dehydrogenase activity"/>
    <property type="evidence" value="ECO:0007669"/>
    <property type="project" value="UniProtKB-EC"/>
</dbReference>
<dbReference type="GO" id="GO:0009245">
    <property type="term" value="P:lipid A biosynthetic process"/>
    <property type="evidence" value="ECO:0007669"/>
    <property type="project" value="UniProtKB-KW"/>
</dbReference>
<dbReference type="GO" id="GO:0009103">
    <property type="term" value="P:lipopolysaccharide biosynthetic process"/>
    <property type="evidence" value="ECO:0007669"/>
    <property type="project" value="UniProtKB-UniRule"/>
</dbReference>
<dbReference type="GO" id="GO:0046677">
    <property type="term" value="P:response to antibiotic"/>
    <property type="evidence" value="ECO:0007669"/>
    <property type="project" value="UniProtKB-KW"/>
</dbReference>
<dbReference type="CDD" id="cd08702">
    <property type="entry name" value="Arna_FMT_C"/>
    <property type="match status" value="1"/>
</dbReference>
<dbReference type="CDD" id="cd05257">
    <property type="entry name" value="Arna_like_SDR_e"/>
    <property type="match status" value="1"/>
</dbReference>
<dbReference type="FunFam" id="3.40.50.720:FF:000197">
    <property type="entry name" value="Bifunctional polymyxin resistance protein ArnA"/>
    <property type="match status" value="1"/>
</dbReference>
<dbReference type="Gene3D" id="3.40.50.12230">
    <property type="match status" value="1"/>
</dbReference>
<dbReference type="Gene3D" id="3.40.50.720">
    <property type="entry name" value="NAD(P)-binding Rossmann-like Domain"/>
    <property type="match status" value="1"/>
</dbReference>
<dbReference type="HAMAP" id="MF_01166">
    <property type="entry name" value="ArnA"/>
    <property type="match status" value="1"/>
</dbReference>
<dbReference type="InterPro" id="IPR045869">
    <property type="entry name" value="Arna-like_SDR_e"/>
</dbReference>
<dbReference type="InterPro" id="IPR021168">
    <property type="entry name" value="Bifun_polymyxin_resist_ArnA"/>
</dbReference>
<dbReference type="InterPro" id="IPR001509">
    <property type="entry name" value="Epimerase_deHydtase"/>
</dbReference>
<dbReference type="InterPro" id="IPR005793">
    <property type="entry name" value="Formyl_trans_C"/>
</dbReference>
<dbReference type="InterPro" id="IPR002376">
    <property type="entry name" value="Formyl_transf_N"/>
</dbReference>
<dbReference type="InterPro" id="IPR036477">
    <property type="entry name" value="Formyl_transf_N_sf"/>
</dbReference>
<dbReference type="InterPro" id="IPR011034">
    <property type="entry name" value="Formyl_transferase-like_C_sf"/>
</dbReference>
<dbReference type="InterPro" id="IPR050177">
    <property type="entry name" value="Lipid_A_modif_metabolic_enz"/>
</dbReference>
<dbReference type="InterPro" id="IPR036291">
    <property type="entry name" value="NAD(P)-bd_dom_sf"/>
</dbReference>
<dbReference type="NCBIfam" id="NF005414">
    <property type="entry name" value="PRK06988.1"/>
    <property type="match status" value="1"/>
</dbReference>
<dbReference type="NCBIfam" id="NF005998">
    <property type="entry name" value="PRK08125.1"/>
    <property type="match status" value="1"/>
</dbReference>
<dbReference type="NCBIfam" id="NF008872">
    <property type="entry name" value="PRK11908.1"/>
    <property type="match status" value="1"/>
</dbReference>
<dbReference type="PANTHER" id="PTHR43245">
    <property type="entry name" value="BIFUNCTIONAL POLYMYXIN RESISTANCE PROTEIN ARNA"/>
    <property type="match status" value="1"/>
</dbReference>
<dbReference type="PANTHER" id="PTHR43245:SF13">
    <property type="entry name" value="UDP-D-APIOSE_UDP-D-XYLOSE SYNTHASE 2"/>
    <property type="match status" value="1"/>
</dbReference>
<dbReference type="Pfam" id="PF01370">
    <property type="entry name" value="Epimerase"/>
    <property type="match status" value="1"/>
</dbReference>
<dbReference type="Pfam" id="PF02911">
    <property type="entry name" value="Formyl_trans_C"/>
    <property type="match status" value="1"/>
</dbReference>
<dbReference type="Pfam" id="PF00551">
    <property type="entry name" value="Formyl_trans_N"/>
    <property type="match status" value="1"/>
</dbReference>
<dbReference type="PIRSF" id="PIRSF036506">
    <property type="entry name" value="Bifun_polymyxin_resist_ArnA"/>
    <property type="match status" value="1"/>
</dbReference>
<dbReference type="SUPFAM" id="SSF50486">
    <property type="entry name" value="FMT C-terminal domain-like"/>
    <property type="match status" value="1"/>
</dbReference>
<dbReference type="SUPFAM" id="SSF53328">
    <property type="entry name" value="Formyltransferase"/>
    <property type="match status" value="1"/>
</dbReference>
<dbReference type="SUPFAM" id="SSF51735">
    <property type="entry name" value="NAD(P)-binding Rossmann-fold domains"/>
    <property type="match status" value="1"/>
</dbReference>
<proteinExistence type="inferred from homology"/>
<name>ARNA_YERPA</name>
<accession>Q1C742</accession>
<sequence length="667" mass="74921">MKAIVFAYHDIGCVGLNALAEAGYDIQAVFTHTDNPGENRFFSSVARVAADLALPVFAPEDVNHPLWVERIRELQPDIIFSFYYRNMLSDEILSLAPQGGFNLHGSLLPQYRGRAPINWVLVNGETETGVTLHQMVKKADAGPIAGQYKVAISDVDTALTLHAKMRDAAQELLRNLLPRMKEGPLPLTPQKEADASYFGRRTAADGEIHWQKSAFTINNLVRAVTEPYPGAFSYLGQRKLTIWRSRPLDLVHNKLPGTVLSTAPLTVACGEGALEIITGQGEAGLYVQGDRLAQEMGIVTDVRLGNKPSNTLKRRTRVLILGVNGFIGNHLTERLLQDDRYEVYGLDIGSDAISRFLGNPAFHFVEGDISIHSEWIEYHIKKCDVILPLVAIATPIEYTRNPLRVFELDFEENLKIVRDCVKYNKRIVFPSTSEVYGMCDDKEFDEDTSRLIVGPINKQRWIYSVSKQLLDRVIWAYGVKEGLKFTLFRPFNWMGPRLDNLDAARIGSSRAITQLILNLVEGSPIKLVDGGAQKRCFTDIHDGIEALFRIIENRDGCCDGRIINIGNPTNEASIRELAEMLLTSFENHELRDHFPPFAGFKDIESSAYYGKGYQDVEYRTPSIKNARRILHWQPEIAMQQTVTETLDFFLRAAVIEKTAAPKDELNA</sequence>
<comment type="function">
    <text evidence="1">Bifunctional enzyme that catalyzes the oxidative decarboxylation of UDP-glucuronic acid (UDP-GlcUA) to UDP-4-keto-arabinose (UDP-Ara4O) and the addition of a formyl group to UDP-4-amino-4-deoxy-L-arabinose (UDP-L-Ara4N) to form UDP-L-4-formamido-arabinose (UDP-L-Ara4FN). The modified arabinose is attached to lipid A and is required for resistance to polymyxin and cationic antimicrobial peptides.</text>
</comment>
<comment type="catalytic activity">
    <reaction evidence="1">
        <text>UDP-alpha-D-glucuronate + NAD(+) = UDP-beta-L-threo-pentopyranos-4-ulose + CO2 + NADH</text>
        <dbReference type="Rhea" id="RHEA:24702"/>
        <dbReference type="ChEBI" id="CHEBI:16526"/>
        <dbReference type="ChEBI" id="CHEBI:57540"/>
        <dbReference type="ChEBI" id="CHEBI:57945"/>
        <dbReference type="ChEBI" id="CHEBI:58052"/>
        <dbReference type="ChEBI" id="CHEBI:58710"/>
        <dbReference type="EC" id="1.1.1.305"/>
    </reaction>
</comment>
<comment type="catalytic activity">
    <reaction evidence="1">
        <text>UDP-4-amino-4-deoxy-beta-L-arabinose + (6R)-10-formyltetrahydrofolate = UDP-4-deoxy-4-formamido-beta-L-arabinose + (6S)-5,6,7,8-tetrahydrofolate + H(+)</text>
        <dbReference type="Rhea" id="RHEA:24706"/>
        <dbReference type="ChEBI" id="CHEBI:15378"/>
        <dbReference type="ChEBI" id="CHEBI:57453"/>
        <dbReference type="ChEBI" id="CHEBI:58708"/>
        <dbReference type="ChEBI" id="CHEBI:58709"/>
        <dbReference type="ChEBI" id="CHEBI:195366"/>
        <dbReference type="EC" id="2.1.2.13"/>
    </reaction>
</comment>
<comment type="pathway">
    <text evidence="1">Nucleotide-sugar biosynthesis; UDP-4-deoxy-4-formamido-beta-L-arabinose biosynthesis; UDP-4-deoxy-4-formamido-beta-L-arabinose from UDP-alpha-D-glucuronate: step 1/3.</text>
</comment>
<comment type="pathway">
    <text evidence="1">Nucleotide-sugar biosynthesis; UDP-4-deoxy-4-formamido-beta-L-arabinose biosynthesis; UDP-4-deoxy-4-formamido-beta-L-arabinose from UDP-alpha-D-glucuronate: step 3/3.</text>
</comment>
<comment type="pathway">
    <text evidence="1">Bacterial outer membrane biogenesis; lipopolysaccharide biosynthesis.</text>
</comment>
<comment type="subunit">
    <text evidence="1">Homohexamer, formed by a dimer of trimers.</text>
</comment>
<comment type="similarity">
    <text evidence="1">In the N-terminal section; belongs to the Fmt family. UDP-L-Ara4N formyltransferase subfamily.</text>
</comment>
<comment type="similarity">
    <text evidence="1">In the C-terminal section; belongs to the NAD(P)-dependent epimerase/dehydratase family. UDP-glucuronic acid decarboxylase subfamily.</text>
</comment>